<organism>
    <name type="scientific">Lactobacillus helveticus (strain DPC 4571)</name>
    <dbReference type="NCBI Taxonomy" id="405566"/>
    <lineage>
        <taxon>Bacteria</taxon>
        <taxon>Bacillati</taxon>
        <taxon>Bacillota</taxon>
        <taxon>Bacilli</taxon>
        <taxon>Lactobacillales</taxon>
        <taxon>Lactobacillaceae</taxon>
        <taxon>Lactobacillus</taxon>
    </lineage>
</organism>
<sequence>MSKAAIAEKEKFVDAFAEELKAAKAILVINYLGLTVEEVTNMRKELRDNDVKMKVIKNTYLRRAAAKAGIEGLDDTFVGPTAVIYTDNADDITEPARIVSKYEDDFDVIEIKGGMLEGKLTSKDEIKELASIPGREGVLSMLVSVLQAPIRDFAYAVKAVAESKDEDSAE</sequence>
<keyword id="KW-0687">Ribonucleoprotein</keyword>
<keyword id="KW-0689">Ribosomal protein</keyword>
<keyword id="KW-0694">RNA-binding</keyword>
<keyword id="KW-0699">rRNA-binding</keyword>
<accession>A8YTF1</accession>
<reference key="1">
    <citation type="journal article" date="2008" name="J. Bacteriol.">
        <title>Genome sequence of Lactobacillus helveticus: an organism distinguished by selective gene loss and IS element expansion.</title>
        <authorList>
            <person name="Callanan M."/>
            <person name="Kaleta P."/>
            <person name="O'Callaghan J."/>
            <person name="O'Sullivan O."/>
            <person name="Jordan K."/>
            <person name="McAuliffe O."/>
            <person name="Sangrador-Vegas A."/>
            <person name="Slattery L."/>
            <person name="Fitzgerald G.F."/>
            <person name="Beresford T."/>
            <person name="Ross R.P."/>
        </authorList>
    </citation>
    <scope>NUCLEOTIDE SEQUENCE [LARGE SCALE GENOMIC DNA]</scope>
    <source>
        <strain>DPC 4571</strain>
    </source>
</reference>
<feature type="chain" id="PRO_1000072090" description="Large ribosomal subunit protein uL10">
    <location>
        <begin position="1"/>
        <end position="170"/>
    </location>
</feature>
<proteinExistence type="inferred from homology"/>
<protein>
    <recommendedName>
        <fullName evidence="1">Large ribosomal subunit protein uL10</fullName>
    </recommendedName>
    <alternativeName>
        <fullName evidence="2">50S ribosomal protein L10</fullName>
    </alternativeName>
</protein>
<dbReference type="EMBL" id="CP000517">
    <property type="protein sequence ID" value="ABX26607.1"/>
    <property type="molecule type" value="Genomic_DNA"/>
</dbReference>
<dbReference type="RefSeq" id="WP_003625908.1">
    <property type="nucleotide sequence ID" value="NC_010080.1"/>
</dbReference>
<dbReference type="SMR" id="A8YTF1"/>
<dbReference type="KEGG" id="lhe:lhv_0395"/>
<dbReference type="eggNOG" id="COG0244">
    <property type="taxonomic scope" value="Bacteria"/>
</dbReference>
<dbReference type="HOGENOM" id="CLU_092227_2_0_9"/>
<dbReference type="Proteomes" id="UP000000790">
    <property type="component" value="Chromosome"/>
</dbReference>
<dbReference type="GO" id="GO:0015934">
    <property type="term" value="C:large ribosomal subunit"/>
    <property type="evidence" value="ECO:0007669"/>
    <property type="project" value="InterPro"/>
</dbReference>
<dbReference type="GO" id="GO:0070180">
    <property type="term" value="F:large ribosomal subunit rRNA binding"/>
    <property type="evidence" value="ECO:0007669"/>
    <property type="project" value="UniProtKB-UniRule"/>
</dbReference>
<dbReference type="GO" id="GO:0003735">
    <property type="term" value="F:structural constituent of ribosome"/>
    <property type="evidence" value="ECO:0007669"/>
    <property type="project" value="InterPro"/>
</dbReference>
<dbReference type="GO" id="GO:0006412">
    <property type="term" value="P:translation"/>
    <property type="evidence" value="ECO:0007669"/>
    <property type="project" value="UniProtKB-UniRule"/>
</dbReference>
<dbReference type="CDD" id="cd05797">
    <property type="entry name" value="Ribosomal_L10"/>
    <property type="match status" value="1"/>
</dbReference>
<dbReference type="Gene3D" id="3.30.70.1730">
    <property type="match status" value="1"/>
</dbReference>
<dbReference type="Gene3D" id="6.10.250.290">
    <property type="match status" value="1"/>
</dbReference>
<dbReference type="HAMAP" id="MF_00362">
    <property type="entry name" value="Ribosomal_uL10"/>
    <property type="match status" value="1"/>
</dbReference>
<dbReference type="InterPro" id="IPR001790">
    <property type="entry name" value="Ribosomal_uL10"/>
</dbReference>
<dbReference type="InterPro" id="IPR043141">
    <property type="entry name" value="Ribosomal_uL10-like_sf"/>
</dbReference>
<dbReference type="InterPro" id="IPR022973">
    <property type="entry name" value="Ribosomal_uL10_bac"/>
</dbReference>
<dbReference type="InterPro" id="IPR047865">
    <property type="entry name" value="Ribosomal_uL10_bac_type"/>
</dbReference>
<dbReference type="InterPro" id="IPR002363">
    <property type="entry name" value="Ribosomal_uL10_CS_bac"/>
</dbReference>
<dbReference type="NCBIfam" id="NF000955">
    <property type="entry name" value="PRK00099.1-1"/>
    <property type="match status" value="1"/>
</dbReference>
<dbReference type="PANTHER" id="PTHR11560">
    <property type="entry name" value="39S RIBOSOMAL PROTEIN L10, MITOCHONDRIAL"/>
    <property type="match status" value="1"/>
</dbReference>
<dbReference type="Pfam" id="PF00466">
    <property type="entry name" value="Ribosomal_L10"/>
    <property type="match status" value="1"/>
</dbReference>
<dbReference type="SUPFAM" id="SSF160369">
    <property type="entry name" value="Ribosomal protein L10-like"/>
    <property type="match status" value="1"/>
</dbReference>
<dbReference type="PROSITE" id="PS01109">
    <property type="entry name" value="RIBOSOMAL_L10"/>
    <property type="match status" value="1"/>
</dbReference>
<name>RL10_LACH4</name>
<evidence type="ECO:0000255" key="1">
    <source>
        <dbReference type="HAMAP-Rule" id="MF_00362"/>
    </source>
</evidence>
<evidence type="ECO:0000305" key="2"/>
<gene>
    <name evidence="1" type="primary">rplJ</name>
    <name type="ordered locus">lhv_0395</name>
</gene>
<comment type="function">
    <text evidence="1">Forms part of the ribosomal stalk, playing a central role in the interaction of the ribosome with GTP-bound translation factors.</text>
</comment>
<comment type="subunit">
    <text evidence="1">Part of the ribosomal stalk of the 50S ribosomal subunit. The N-terminus interacts with L11 and the large rRNA to form the base of the stalk. The C-terminus forms an elongated spine to which L12 dimers bind in a sequential fashion forming a multimeric L10(L12)X complex.</text>
</comment>
<comment type="similarity">
    <text evidence="1">Belongs to the universal ribosomal protein uL10 family.</text>
</comment>